<comment type="function">
    <text evidence="1">Regulatory subunit of a potassium efflux system that confers protection against electrophiles. Required for full activity of KefB.</text>
</comment>
<comment type="catalytic activity">
    <reaction evidence="1">
        <text>a quinone + NADH + H(+) = a quinol + NAD(+)</text>
        <dbReference type="Rhea" id="RHEA:46160"/>
        <dbReference type="ChEBI" id="CHEBI:15378"/>
        <dbReference type="ChEBI" id="CHEBI:24646"/>
        <dbReference type="ChEBI" id="CHEBI:57540"/>
        <dbReference type="ChEBI" id="CHEBI:57945"/>
        <dbReference type="ChEBI" id="CHEBI:132124"/>
        <dbReference type="EC" id="1.6.5.2"/>
    </reaction>
</comment>
<comment type="catalytic activity">
    <reaction evidence="1">
        <text>a quinone + NADPH + H(+) = a quinol + NADP(+)</text>
        <dbReference type="Rhea" id="RHEA:46164"/>
        <dbReference type="ChEBI" id="CHEBI:15378"/>
        <dbReference type="ChEBI" id="CHEBI:24646"/>
        <dbReference type="ChEBI" id="CHEBI:57783"/>
        <dbReference type="ChEBI" id="CHEBI:58349"/>
        <dbReference type="ChEBI" id="CHEBI:132124"/>
        <dbReference type="EC" id="1.6.5.2"/>
    </reaction>
</comment>
<comment type="subunit">
    <text evidence="1">Interacts with KefB.</text>
</comment>
<comment type="subcellular location">
    <subcellularLocation>
        <location evidence="1">Cell inner membrane</location>
        <topology evidence="1">Peripheral membrane protein</topology>
        <orientation evidence="1">Cytoplasmic side</orientation>
    </subcellularLocation>
</comment>
<comment type="similarity">
    <text evidence="1">Belongs to the NAD(P)H dehydrogenase (quinone) family. KefG subfamily.</text>
</comment>
<dbReference type="EC" id="1.6.5.2" evidence="1"/>
<dbReference type="EMBL" id="CP000802">
    <property type="protein sequence ID" value="ABV07763.1"/>
    <property type="molecule type" value="Genomic_DNA"/>
</dbReference>
<dbReference type="SMR" id="A8A5F9"/>
<dbReference type="KEGG" id="ecx:EcHS_A3548"/>
<dbReference type="HOGENOM" id="CLU_058643_0_1_6"/>
<dbReference type="GO" id="GO:0005886">
    <property type="term" value="C:plasma membrane"/>
    <property type="evidence" value="ECO:0007669"/>
    <property type="project" value="UniProtKB-SubCell"/>
</dbReference>
<dbReference type="GO" id="GO:0009055">
    <property type="term" value="F:electron transfer activity"/>
    <property type="evidence" value="ECO:0007669"/>
    <property type="project" value="TreeGrafter"/>
</dbReference>
<dbReference type="GO" id="GO:0010181">
    <property type="term" value="F:FMN binding"/>
    <property type="evidence" value="ECO:0007669"/>
    <property type="project" value="TreeGrafter"/>
</dbReference>
<dbReference type="GO" id="GO:0050136">
    <property type="term" value="F:NADH:ubiquinone reductase (non-electrogenic) activity"/>
    <property type="evidence" value="ECO:0007669"/>
    <property type="project" value="RHEA"/>
</dbReference>
<dbReference type="GO" id="GO:0008753">
    <property type="term" value="F:NADPH dehydrogenase (quinone) activity"/>
    <property type="evidence" value="ECO:0007669"/>
    <property type="project" value="RHEA"/>
</dbReference>
<dbReference type="GO" id="GO:1901381">
    <property type="term" value="P:positive regulation of potassium ion transmembrane transport"/>
    <property type="evidence" value="ECO:0007669"/>
    <property type="project" value="UniProtKB-UniRule"/>
</dbReference>
<dbReference type="GO" id="GO:0006813">
    <property type="term" value="P:potassium ion transport"/>
    <property type="evidence" value="ECO:0007669"/>
    <property type="project" value="InterPro"/>
</dbReference>
<dbReference type="FunFam" id="3.40.50.360:FF:000013">
    <property type="entry name" value="Glutathione-regulated potassium-efflux system ancillary protein KefG"/>
    <property type="match status" value="1"/>
</dbReference>
<dbReference type="Gene3D" id="3.40.50.360">
    <property type="match status" value="1"/>
</dbReference>
<dbReference type="HAMAP" id="MF_01415">
    <property type="entry name" value="K_H_efflux_KefG"/>
    <property type="match status" value="1"/>
</dbReference>
<dbReference type="InterPro" id="IPR003680">
    <property type="entry name" value="Flavodoxin_fold"/>
</dbReference>
<dbReference type="InterPro" id="IPR029039">
    <property type="entry name" value="Flavoprotein-like_sf"/>
</dbReference>
<dbReference type="InterPro" id="IPR023947">
    <property type="entry name" value="K_H_efflux_KefG"/>
</dbReference>
<dbReference type="InterPro" id="IPR046980">
    <property type="entry name" value="KefG/KefF"/>
</dbReference>
<dbReference type="NCBIfam" id="NF003430">
    <property type="entry name" value="PRK04930.1"/>
    <property type="match status" value="1"/>
</dbReference>
<dbReference type="PANTHER" id="PTHR47307">
    <property type="entry name" value="GLUTATHIONE-REGULATED POTASSIUM-EFFLUX SYSTEM ANCILLARY PROTEIN KEFG"/>
    <property type="match status" value="1"/>
</dbReference>
<dbReference type="PANTHER" id="PTHR47307:SF1">
    <property type="entry name" value="GLUTATHIONE-REGULATED POTASSIUM-EFFLUX SYSTEM ANCILLARY PROTEIN KEFG"/>
    <property type="match status" value="1"/>
</dbReference>
<dbReference type="Pfam" id="PF02525">
    <property type="entry name" value="Flavodoxin_2"/>
    <property type="match status" value="1"/>
</dbReference>
<dbReference type="SUPFAM" id="SSF52218">
    <property type="entry name" value="Flavoproteins"/>
    <property type="match status" value="1"/>
</dbReference>
<evidence type="ECO:0000255" key="1">
    <source>
        <dbReference type="HAMAP-Rule" id="MF_01415"/>
    </source>
</evidence>
<proteinExistence type="inferred from homology"/>
<protein>
    <recommendedName>
        <fullName evidence="1">Glutathione-regulated potassium-efflux system ancillary protein KefG</fullName>
    </recommendedName>
    <alternativeName>
        <fullName evidence="1">Putative quinone oxidoreductase KefG</fullName>
        <ecNumber evidence="1">1.6.5.2</ecNumber>
    </alternativeName>
</protein>
<feature type="chain" id="PRO_1000068476" description="Glutathione-regulated potassium-efflux system ancillary protein KefG">
    <location>
        <begin position="1"/>
        <end position="184"/>
    </location>
</feature>
<gene>
    <name evidence="1" type="primary">kefG</name>
    <name type="ordered locus">EcHS_A3548</name>
</gene>
<keyword id="KW-0997">Cell inner membrane</keyword>
<keyword id="KW-1003">Cell membrane</keyword>
<keyword id="KW-0472">Membrane</keyword>
<keyword id="KW-0520">NAD</keyword>
<keyword id="KW-0560">Oxidoreductase</keyword>
<reference key="1">
    <citation type="journal article" date="2008" name="J. Bacteriol.">
        <title>The pangenome structure of Escherichia coli: comparative genomic analysis of E. coli commensal and pathogenic isolates.</title>
        <authorList>
            <person name="Rasko D.A."/>
            <person name="Rosovitz M.J."/>
            <person name="Myers G.S.A."/>
            <person name="Mongodin E.F."/>
            <person name="Fricke W.F."/>
            <person name="Gajer P."/>
            <person name="Crabtree J."/>
            <person name="Sebaihia M."/>
            <person name="Thomson N.R."/>
            <person name="Chaudhuri R."/>
            <person name="Henderson I.R."/>
            <person name="Sperandio V."/>
            <person name="Ravel J."/>
        </authorList>
    </citation>
    <scope>NUCLEOTIDE SEQUENCE [LARGE SCALE GENOMIC DNA]</scope>
    <source>
        <strain>HS</strain>
    </source>
</reference>
<organism>
    <name type="scientific">Escherichia coli O9:H4 (strain HS)</name>
    <dbReference type="NCBI Taxonomy" id="331112"/>
    <lineage>
        <taxon>Bacteria</taxon>
        <taxon>Pseudomonadati</taxon>
        <taxon>Pseudomonadota</taxon>
        <taxon>Gammaproteobacteria</taxon>
        <taxon>Enterobacterales</taxon>
        <taxon>Enterobacteriaceae</taxon>
        <taxon>Escherichia</taxon>
    </lineage>
</organism>
<sequence length="184" mass="20958">MMSQPAKVLLLYAHPESQDSVANRVLLKPATQLSNVTVHDLYAHYPDFFIDIPREQALLREHEVIVFQHPLYTYSCPALLKEWLDRVLSRGFASGPGGNQLAGKYWRSVITTGEPESAYRYDALNRYPMSDVLRPFELAAGMCRMHWLSPIIIYWARRQSAQELASHARAYGDWLANPLSPGGR</sequence>
<accession>A8A5F9</accession>
<name>KEFG_ECOHS</name>